<comment type="function">
    <molecule>Delta-paraponeritoxin-Pc1a</molecule>
    <text evidence="1 2 3 4 5 15">Toxin that causes pain in vertebrates by targeting tetrodotoxin (TTX)-sensitive sodium channels in peripheral sensory neurons (PubMed:37221205). Also blocks synaptic transmission and stimulates smooth muscle contraction (PubMed:12097919, PubMed:1685424, PubMed:1685425). Converts the normally rapidly activating and inactivating sodium channel current into one that does not inactivate (PubMed:27266841, PubMed:37221205). Is active on both Nav1.6/SCN8A and Nav1.7/SCN9A sodium channels, with a much potent activity on Nav1.6/SCN8A (EC(50)=97 nM on human channels) than on Nav1.7/SCN9A (EC(50)=2.3 uM on human and EC(50)=1.8 uM on mouse channels) (PubMed:27266841, PubMed:37221205). On these channels, causes a sustained current, a reduction in peak current amplitude and a hyperpolarising shift (PubMed:27266841, PubMed:37221205). Modulates Nav1.7/SCN9A in a non-competitive manner with TTX or tetracaine (Probable). Toxin-induced persistant current is very slowly reversible with repeated wash steps over 30 minutes (PubMed:37221205). In vivo, shallow intraplantar injection in mice causes immediate, long-lasting and near-maximal nocifensive behaviors, which decrease with coinjection of TTX (PubMed:37221205). When tested on insects, causes paralysis but not mortality at high doses (PubMed:37221205).</text>
</comment>
<comment type="subcellular location">
    <subcellularLocation>
        <location evidence="2">Secreted</location>
    </subcellularLocation>
</comment>
<comment type="tissue specificity">
    <text evidence="13">Expressed by the venom gland.</text>
</comment>
<comment type="PTM">
    <text evidence="4">The glycine-PoTx is a non-amidated form of poneratoxin, with an extra-Gly at C-terminus. This loss of amidation does not alter toxin activity on Nav1.7/SCN9A.</text>
</comment>
<comment type="toxic dose">
    <text evidence="5">PD(50) (measured at 1 hour) is 74.3 nmol/g by intrathoracic injection into blowflies (Lucilia caesar). Is not lethal by intrathoracic injection to blowflies at the highest dose tested (123 nmol/g).</text>
</comment>
<comment type="miscellaneous">
    <text evidence="4">The variant A23E has an 8-fold reduction in potency compared to delta-paraponeritoxin-Pc1a.</text>
</comment>
<comment type="miscellaneous">
    <text evidence="4">The variant D22N/A23V, has an ~5-fold increase in potency compared to delta-paraponeritoxin-Pc1a.</text>
</comment>
<comment type="miscellaneous">
    <text evidence="5">Negative results: does not show activity on human Nav1.8/SCN10A channels (EC(50)&gt;10 uM). At 1 uM, also very weakly inhibits hNav1.9/SCN11A inactivation.</text>
</comment>
<comment type="online information" name="Protein Spotlight">
    <link uri="https://www.proteinspotlight.org/back_issues/014"/>
    <text>Princess Bala's sting - Issue 14 of September 2001</text>
</comment>
<sequence length="26" mass="2814">FLPLLILGSLLMTPPVIQAIHDAQRG</sequence>
<organism>
    <name type="scientific">Paraponera clavata</name>
    <name type="common">Bullet ant</name>
    <name type="synonym">Formica clavata</name>
    <dbReference type="NCBI Taxonomy" id="55425"/>
    <lineage>
        <taxon>Eukaryota</taxon>
        <taxon>Metazoa</taxon>
        <taxon>Ecdysozoa</taxon>
        <taxon>Arthropoda</taxon>
        <taxon>Hexapoda</taxon>
        <taxon>Insecta</taxon>
        <taxon>Pterygota</taxon>
        <taxon>Neoptera</taxon>
        <taxon>Endopterygota</taxon>
        <taxon>Hymenoptera</taxon>
        <taxon>Apocrita</taxon>
        <taxon>Aculeata</taxon>
        <taxon>Formicoidea</taxon>
        <taxon>Formicidae</taxon>
        <taxon>Paraponerinae</taxon>
        <taxon>Paraponera</taxon>
    </lineage>
</organism>
<protein>
    <recommendedName>
        <fullName evidence="11">Glycyl-poneratoxin</fullName>
        <shortName evidence="11">Glycyl-PoTx</shortName>
    </recommendedName>
    <component>
        <recommendedName>
            <fullName evidence="14">Delta-paraponeritoxin-Pc1a</fullName>
            <shortName evidence="14">Delta-PPOTX-Pc1a</shortName>
        </recommendedName>
        <alternativeName>
            <fullName>Pac-TX</fullName>
        </alternativeName>
        <alternativeName>
            <fullName evidence="6 7 8 9 10">Poneratoxin</fullName>
            <shortName evidence="9 10">PoTX</shortName>
        </alternativeName>
        <alternativeName>
            <fullName evidence="12">Poneritoxin</fullName>
        </alternativeName>
    </component>
</protein>
<proteinExistence type="evidence at protein level"/>
<evidence type="ECO:0000269" key="1">
    <source>
    </source>
</evidence>
<evidence type="ECO:0000269" key="2">
    <source>
    </source>
</evidence>
<evidence type="ECO:0000269" key="3">
    <source>
    </source>
</evidence>
<evidence type="ECO:0000269" key="4">
    <source>
    </source>
</evidence>
<evidence type="ECO:0000269" key="5">
    <source>
    </source>
</evidence>
<evidence type="ECO:0000303" key="6">
    <source>
    </source>
</evidence>
<evidence type="ECO:0000303" key="7">
    <source>
    </source>
</evidence>
<evidence type="ECO:0000303" key="8">
    <source>
    </source>
</evidence>
<evidence type="ECO:0000303" key="9">
    <source>
    </source>
</evidence>
<evidence type="ECO:0000303" key="10">
    <source>
    </source>
</evidence>
<evidence type="ECO:0000303" key="11">
    <source>
    </source>
</evidence>
<evidence type="ECO:0000305" key="12"/>
<evidence type="ECO:0000305" key="13">
    <source>
    </source>
</evidence>
<evidence type="ECO:0000305" key="14">
    <source>
    </source>
</evidence>
<evidence type="ECO:0000305" key="15">
    <source>
    </source>
</evidence>
<evidence type="ECO:0007829" key="16">
    <source>
        <dbReference type="PDB" id="1G92"/>
    </source>
</evidence>
<dbReference type="PDB" id="1G92">
    <property type="method" value="NMR"/>
    <property type="chains" value="A=1-25"/>
</dbReference>
<dbReference type="PDBsum" id="1G92"/>
<dbReference type="BMRB" id="P41736"/>
<dbReference type="SMR" id="P41736"/>
<dbReference type="EvolutionaryTrace" id="P41736"/>
<dbReference type="GO" id="GO:0005576">
    <property type="term" value="C:extracellular region"/>
    <property type="evidence" value="ECO:0007669"/>
    <property type="project" value="UniProtKB-SubCell"/>
</dbReference>
<dbReference type="GO" id="GO:0035792">
    <property type="term" value="C:host cell postsynaptic membrane"/>
    <property type="evidence" value="ECO:0007669"/>
    <property type="project" value="UniProtKB-KW"/>
</dbReference>
<dbReference type="GO" id="GO:0044231">
    <property type="term" value="C:host cell presynaptic membrane"/>
    <property type="evidence" value="ECO:0007669"/>
    <property type="project" value="UniProtKB-KW"/>
</dbReference>
<dbReference type="GO" id="GO:0017080">
    <property type="term" value="F:sodium channel regulator activity"/>
    <property type="evidence" value="ECO:0007669"/>
    <property type="project" value="UniProtKB-KW"/>
</dbReference>
<dbReference type="GO" id="GO:0090729">
    <property type="term" value="F:toxin activity"/>
    <property type="evidence" value="ECO:0007669"/>
    <property type="project" value="UniProtKB-KW"/>
</dbReference>
<feature type="peptide" id="PRO_0000459135" description="Glycyl-poneratoxin" evidence="4">
    <location>
        <begin position="1"/>
        <end position="26"/>
    </location>
</feature>
<feature type="peptide" id="PRO_0000044538" description="Delta-paraponeritoxin-Pc1a" evidence="2 4">
    <location>
        <begin position="1"/>
        <end position="25"/>
    </location>
</feature>
<feature type="modified residue" description="Arginine amide; in delta-paraponeritoxin-Pc1a" evidence="2">
    <location>
        <position position="25"/>
    </location>
</feature>
<feature type="sequence variant" evidence="4">
    <original>DA</original>
    <variation>NV</variation>
    <location>
        <begin position="22"/>
        <end position="23"/>
    </location>
</feature>
<feature type="sequence variant" evidence="4">
    <original>A</original>
    <variation>E</variation>
    <location>
        <position position="23"/>
    </location>
</feature>
<feature type="helix" evidence="16">
    <location>
        <begin position="2"/>
        <end position="8"/>
    </location>
</feature>
<feature type="strand" evidence="16">
    <location>
        <begin position="11"/>
        <end position="13"/>
    </location>
</feature>
<feature type="turn" evidence="16">
    <location>
        <begin position="16"/>
        <end position="18"/>
    </location>
</feature>
<feature type="helix" evidence="16">
    <location>
        <begin position="19"/>
        <end position="24"/>
    </location>
</feature>
<accession>P41736</accession>
<reference key="1">
    <citation type="journal article" date="1991" name="Comp. Biochem. Physiol.">
        <title>Pharmacological characterization and chemical fractionation of the venom of the ponerine ant, Paraponera clavata (F.).</title>
        <authorList>
            <person name="Piek T."/>
            <person name="Hue B."/>
            <person name="Mantel P."/>
            <person name="Nakajima T."/>
            <person name="Schmidt J.O."/>
        </authorList>
    </citation>
    <scope>PROTEIN SEQUENCE</scope>
    <scope>FUNCTION</scope>
    <scope>AMIDATION AT ARG-25</scope>
    <scope>SUBCELLULAR LOCATION</scope>
    <source>
        <tissue>Venom</tissue>
    </source>
</reference>
<reference key="2">
    <citation type="book" date="1993" name="Peptides 1992">
        <title>Poneratoxin, neurotoxic pentacosapeptide from ant venom: synthetic, biological and conformational studies.</title>
        <editorList>
            <person name="Schneider C.H."/>
            <person name="Eberles A.N."/>
        </editorList>
        <authorList>
            <person name="Konopinska D."/>
            <person name="Lombarska-Sliwinska D."/>
            <person name="Plech A."/>
            <person name="Rosinski G."/>
            <person name="Lisowski M."/>
        </authorList>
    </citation>
    <scope>PROTEIN SEQUENCE</scope>
    <scope>SYNTHESIS</scope>
    <source>
        <tissue>Venom</tissue>
    </source>
</reference>
<reference key="3">
    <citation type="journal article" date="1991" name="Comp. Biochem. Physiol.">
        <title>Poneratoxin, a novel peptide neurotoxin from the venom of the ant, Paraponera clavata.</title>
        <authorList>
            <person name="Piek T."/>
            <person name="Duval A."/>
            <person name="Hue B."/>
            <person name="Karst H."/>
            <person name="Lapied B."/>
            <person name="Mantel P."/>
            <person name="Nakajima T."/>
            <person name="Pelhate M."/>
            <person name="Schmidt J.O."/>
        </authorList>
    </citation>
    <scope>FUNCTION</scope>
    <scope>SYNTHESIS</scope>
    <source>
        <tissue>Venom</tissue>
    </source>
</reference>
<reference key="4">
    <citation type="journal article" date="1992" name="Pflugers Arch.">
        <title>Poneratoxin, a new toxin from an ant venom, reveals an interconversion between two gating modes of the Na channels in frog skeletal muscle fibres.</title>
        <authorList>
            <person name="Duval A."/>
            <person name="Malecot C.O."/>
            <person name="Pelhate M."/>
            <person name="Piek T."/>
        </authorList>
    </citation>
    <scope>FUNCTION</scope>
    <source>
        <tissue>Venom</tissue>
    </source>
</reference>
<reference key="5">
    <citation type="journal article" date="2002" name="Cell. Mol. Biol. Lett.">
        <title>The effect of poneratoxin on neuromuscular transmission in the rat diaphragm.</title>
        <authorList>
            <person name="Hendrich A.B."/>
            <person name="Mozrzymas J.W."/>
            <person name="Konopinska D."/>
            <person name="Scuka M."/>
        </authorList>
    </citation>
    <scope>FUNCTION</scope>
</reference>
<reference key="6">
    <citation type="journal article" date="2017" name="Peptides">
        <title>A reexamination of poneratoxin from the venom of the bullet ant Paraponera clavata.</title>
        <authorList>
            <person name="Johnson S.R."/>
            <person name="Rikli H.G."/>
            <person name="Schmidt J.O."/>
            <person name="Evans M.S."/>
        </authorList>
    </citation>
    <scope>FUNCTION</scope>
    <scope>VARIANTS 22-ASP-ALA-23 DELINS ASN-VAL AND GLU-23</scope>
    <scope>SYNTHESIS</scope>
</reference>
<reference key="7">
    <citation type="journal article" date="2023" name="Nat. Commun.">
        <title>Ant venoms contain vertebrate-selective pain-causing sodium channel toxins.</title>
        <authorList>
            <person name="Robinson S.D."/>
            <person name="Deuis J.R."/>
            <person name="Touchard A."/>
            <person name="Keramidas A."/>
            <person name="Mueller A."/>
            <person name="Schroeder C.I."/>
            <person name="Barasse V."/>
            <person name="Walker A.A."/>
            <person name="Brinkwirth N."/>
            <person name="Jami S."/>
            <person name="Bonnafe E."/>
            <person name="Treilhou M."/>
            <person name="Undheim E.A.B."/>
            <person name="Schmidt J.O."/>
            <person name="King G.F."/>
            <person name="Vetter I."/>
        </authorList>
    </citation>
    <scope>FUNCTION</scope>
    <scope>BIOASSAY</scope>
    <scope>TOXIC DOSE</scope>
    <scope>SYNTHESIS</scope>
</reference>
<reference key="8">
    <citation type="journal article" date="2016" name="Toxins">
        <title>The biochemical toxin arsenal from ant venoms.</title>
        <authorList>
            <person name="Touchard A."/>
            <person name="Aili S.R."/>
            <person name="Fox E.G."/>
            <person name="Escoubas P."/>
            <person name="Orivel J."/>
            <person name="Nicholson G.M."/>
            <person name="Dejean A."/>
        </authorList>
    </citation>
    <scope>REVIEW</scope>
    <scope>NOMENCLATURE</scope>
</reference>
<reference key="9">
    <citation type="journal article" date="2004" name="Eur. J. Biochem.">
        <title>Poneratoxin, a neurotoxin from ant venom. Structure and expression in insect cells and construction of a bio-insecticide.</title>
        <authorList>
            <person name="Szolajska E."/>
            <person name="Poznanski J."/>
            <person name="Ferber M.L."/>
            <person name="Michalik J."/>
            <person name="Gout E."/>
            <person name="Fender P."/>
            <person name="Bailly I."/>
            <person name="Dublet B."/>
            <person name="Chroboczek J."/>
        </authorList>
    </citation>
    <scope>STRUCTURE BY NMR</scope>
    <scope>SYNTHESIS</scope>
</reference>
<name>TX1A_PARCV</name>
<keyword id="KW-0002">3D-structure</keyword>
<keyword id="KW-0027">Amidation</keyword>
<keyword id="KW-0903">Direct protein sequencing</keyword>
<keyword id="KW-0872">Ion channel impairing toxin</keyword>
<keyword id="KW-0528">Neurotoxin</keyword>
<keyword id="KW-0629">Postsynaptic neurotoxin</keyword>
<keyword id="KW-0638">Presynaptic neurotoxin</keyword>
<keyword id="KW-0964">Secreted</keyword>
<keyword id="KW-0800">Toxin</keyword>
<keyword id="KW-0738">Voltage-gated sodium channel impairing toxin</keyword>